<feature type="chain" id="PRO_1000079973" description="Exodeoxyribonuclease 7 large subunit">
    <location>
        <begin position="1"/>
        <end position="476"/>
    </location>
</feature>
<organism>
    <name type="scientific">Bartonella bacilliformis (strain ATCC 35685 / KC583 / Herrer 020/F12,63)</name>
    <dbReference type="NCBI Taxonomy" id="360095"/>
    <lineage>
        <taxon>Bacteria</taxon>
        <taxon>Pseudomonadati</taxon>
        <taxon>Pseudomonadota</taxon>
        <taxon>Alphaproteobacteria</taxon>
        <taxon>Hyphomicrobiales</taxon>
        <taxon>Bartonellaceae</taxon>
        <taxon>Bartonella</taxon>
    </lineage>
</organism>
<reference key="1">
    <citation type="submission" date="2006-12" db="EMBL/GenBank/DDBJ databases">
        <authorList>
            <person name="Hendrix L."/>
            <person name="Mohamoud Y."/>
            <person name="Radune D."/>
            <person name="Shvartsbeyn A."/>
            <person name="Daugherty S."/>
            <person name="Dodson R."/>
            <person name="Durkin A.S."/>
            <person name="Harkins D."/>
            <person name="Huot H."/>
            <person name="Kothari S.P."/>
            <person name="Madupu R."/>
            <person name="Li J."/>
            <person name="Nelson W.C."/>
            <person name="Shrivastava S."/>
            <person name="Giglio M.G."/>
            <person name="Haft D."/>
            <person name="Selengut J."/>
            <person name="Fraser-Ligget C."/>
            <person name="Seshadri R."/>
        </authorList>
    </citation>
    <scope>NUCLEOTIDE SEQUENCE [LARGE SCALE GENOMIC DNA]</scope>
    <source>
        <strain>ATCC 35685 / KC583 / Herrer 020/F12,63</strain>
    </source>
</reference>
<name>EX7L_BARBK</name>
<evidence type="ECO:0000255" key="1">
    <source>
        <dbReference type="HAMAP-Rule" id="MF_00378"/>
    </source>
</evidence>
<keyword id="KW-0963">Cytoplasm</keyword>
<keyword id="KW-0269">Exonuclease</keyword>
<keyword id="KW-0378">Hydrolase</keyword>
<keyword id="KW-0540">Nuclease</keyword>
<comment type="function">
    <text evidence="1">Bidirectionally degrades single-stranded DNA into large acid-insoluble oligonucleotides, which are then degraded further into small acid-soluble oligonucleotides.</text>
</comment>
<comment type="catalytic activity">
    <reaction evidence="1">
        <text>Exonucleolytic cleavage in either 5'- to 3'- or 3'- to 5'-direction to yield nucleoside 5'-phosphates.</text>
        <dbReference type="EC" id="3.1.11.6"/>
    </reaction>
</comment>
<comment type="subunit">
    <text evidence="1">Heterooligomer composed of large and small subunits.</text>
</comment>
<comment type="subcellular location">
    <subcellularLocation>
        <location evidence="1">Cytoplasm</location>
    </subcellularLocation>
</comment>
<comment type="similarity">
    <text evidence="1">Belongs to the XseA family.</text>
</comment>
<proteinExistence type="inferred from homology"/>
<dbReference type="EC" id="3.1.11.6" evidence="1"/>
<dbReference type="EMBL" id="CP000524">
    <property type="protein sequence ID" value="ABM44707.1"/>
    <property type="molecule type" value="Genomic_DNA"/>
</dbReference>
<dbReference type="RefSeq" id="WP_005767582.1">
    <property type="nucleotide sequence ID" value="NC_008783.1"/>
</dbReference>
<dbReference type="SMR" id="A1UTK7"/>
<dbReference type="STRING" id="360095.BARBAKC583_1034"/>
<dbReference type="GeneID" id="4684427"/>
<dbReference type="KEGG" id="bbk:BARBAKC583_1034"/>
<dbReference type="PATRIC" id="fig|360095.6.peg.1003"/>
<dbReference type="eggNOG" id="COG1570">
    <property type="taxonomic scope" value="Bacteria"/>
</dbReference>
<dbReference type="HOGENOM" id="CLU_023625_3_1_5"/>
<dbReference type="OrthoDB" id="9802795at2"/>
<dbReference type="Proteomes" id="UP000000643">
    <property type="component" value="Chromosome"/>
</dbReference>
<dbReference type="GO" id="GO:0005737">
    <property type="term" value="C:cytoplasm"/>
    <property type="evidence" value="ECO:0007669"/>
    <property type="project" value="UniProtKB-SubCell"/>
</dbReference>
<dbReference type="GO" id="GO:0009318">
    <property type="term" value="C:exodeoxyribonuclease VII complex"/>
    <property type="evidence" value="ECO:0007669"/>
    <property type="project" value="InterPro"/>
</dbReference>
<dbReference type="GO" id="GO:0008855">
    <property type="term" value="F:exodeoxyribonuclease VII activity"/>
    <property type="evidence" value="ECO:0007669"/>
    <property type="project" value="UniProtKB-UniRule"/>
</dbReference>
<dbReference type="GO" id="GO:0003676">
    <property type="term" value="F:nucleic acid binding"/>
    <property type="evidence" value="ECO:0007669"/>
    <property type="project" value="InterPro"/>
</dbReference>
<dbReference type="GO" id="GO:0006308">
    <property type="term" value="P:DNA catabolic process"/>
    <property type="evidence" value="ECO:0007669"/>
    <property type="project" value="UniProtKB-UniRule"/>
</dbReference>
<dbReference type="CDD" id="cd04489">
    <property type="entry name" value="ExoVII_LU_OBF"/>
    <property type="match status" value="1"/>
</dbReference>
<dbReference type="HAMAP" id="MF_00378">
    <property type="entry name" value="Exonuc_7_L"/>
    <property type="match status" value="1"/>
</dbReference>
<dbReference type="InterPro" id="IPR003753">
    <property type="entry name" value="Exonuc_VII_L"/>
</dbReference>
<dbReference type="InterPro" id="IPR020579">
    <property type="entry name" value="Exonuc_VII_lsu_C"/>
</dbReference>
<dbReference type="InterPro" id="IPR025824">
    <property type="entry name" value="OB-fold_nuc-bd_dom"/>
</dbReference>
<dbReference type="NCBIfam" id="TIGR00237">
    <property type="entry name" value="xseA"/>
    <property type="match status" value="1"/>
</dbReference>
<dbReference type="PANTHER" id="PTHR30008">
    <property type="entry name" value="EXODEOXYRIBONUCLEASE 7 LARGE SUBUNIT"/>
    <property type="match status" value="1"/>
</dbReference>
<dbReference type="PANTHER" id="PTHR30008:SF0">
    <property type="entry name" value="EXODEOXYRIBONUCLEASE 7 LARGE SUBUNIT"/>
    <property type="match status" value="1"/>
</dbReference>
<dbReference type="Pfam" id="PF02601">
    <property type="entry name" value="Exonuc_VII_L"/>
    <property type="match status" value="1"/>
</dbReference>
<dbReference type="Pfam" id="PF13742">
    <property type="entry name" value="tRNA_anti_2"/>
    <property type="match status" value="1"/>
</dbReference>
<sequence>MADFFTEKPVATNVAEFSVSEIANALKRVVEDKFGYVRIRGEISGYRGAHASGHAYFALKDDKARLEAVIWLSVMKKLSFPPEEGMEVIAVGKLTTYPGSSKYQIVIEALEPTGVGALMTLLENRKKKLAEEGLFDAANKKPLPYMPKIIGVVTSPTGAVIRDIIHRIFDRFPLHILVWPVRVQGETCGREVASAVEGFNALFLGGGIPKPDLIIVARGGGSLEDLWGFNDEAVVRAVYASAIPVISAVGHETDWTLIDYAADWRAPTPTGAAERAVPVKLDIEVHLASINSRFRVGLARYFDFHQQKLRALVRGLPTVDQLFALPRRGFDEISSRLQRALCVSYDKKCFYFHALSLRFSPRLLNTKKAQYAIQEYTGRLHRAFLRNVEKQRAQVEMACRLLKSTSYQNILERGFVLALGKDHKPIKRLMQLPETGQISLRFFDGEIDVSTHDRAVNRSLKNKRIKSQKDDQGLLF</sequence>
<accession>A1UTK7</accession>
<gene>
    <name evidence="1" type="primary">xseA</name>
    <name type="ordered locus">BARBAKC583_1034</name>
</gene>
<protein>
    <recommendedName>
        <fullName evidence="1">Exodeoxyribonuclease 7 large subunit</fullName>
        <ecNumber evidence="1">3.1.11.6</ecNumber>
    </recommendedName>
    <alternativeName>
        <fullName evidence="1">Exodeoxyribonuclease VII large subunit</fullName>
        <shortName evidence="1">Exonuclease VII large subunit</shortName>
    </alternativeName>
</protein>